<feature type="chain" id="PRO_1000024721" description="Adenosylhomocysteinase">
    <location>
        <begin position="1"/>
        <end position="473"/>
    </location>
</feature>
<feature type="binding site" evidence="1">
    <location>
        <position position="64"/>
    </location>
    <ligand>
        <name>substrate</name>
    </ligand>
</feature>
<feature type="binding site" evidence="1">
    <location>
        <position position="139"/>
    </location>
    <ligand>
        <name>substrate</name>
    </ligand>
</feature>
<feature type="binding site" evidence="1">
    <location>
        <position position="199"/>
    </location>
    <ligand>
        <name>substrate</name>
    </ligand>
</feature>
<feature type="binding site" evidence="1">
    <location>
        <begin position="200"/>
        <end position="202"/>
    </location>
    <ligand>
        <name>NAD(+)</name>
        <dbReference type="ChEBI" id="CHEBI:57540"/>
    </ligand>
</feature>
<feature type="binding site" evidence="1">
    <location>
        <position position="229"/>
    </location>
    <ligand>
        <name>substrate</name>
    </ligand>
</feature>
<feature type="binding site" evidence="1">
    <location>
        <position position="233"/>
    </location>
    <ligand>
        <name>substrate</name>
    </ligand>
</feature>
<feature type="binding site" evidence="1">
    <location>
        <position position="234"/>
    </location>
    <ligand>
        <name>NAD(+)</name>
        <dbReference type="ChEBI" id="CHEBI:57540"/>
    </ligand>
</feature>
<feature type="binding site" evidence="1">
    <location>
        <begin position="263"/>
        <end position="268"/>
    </location>
    <ligand>
        <name>NAD(+)</name>
        <dbReference type="ChEBI" id="CHEBI:57540"/>
    </ligand>
</feature>
<feature type="binding site" evidence="1">
    <location>
        <position position="286"/>
    </location>
    <ligand>
        <name>NAD(+)</name>
        <dbReference type="ChEBI" id="CHEBI:57540"/>
    </ligand>
</feature>
<feature type="binding site" evidence="1">
    <location>
        <position position="321"/>
    </location>
    <ligand>
        <name>NAD(+)</name>
        <dbReference type="ChEBI" id="CHEBI:57540"/>
    </ligand>
</feature>
<feature type="binding site" evidence="1">
    <location>
        <begin position="342"/>
        <end position="344"/>
    </location>
    <ligand>
        <name>NAD(+)</name>
        <dbReference type="ChEBI" id="CHEBI:57540"/>
    </ligand>
</feature>
<feature type="binding site" evidence="1">
    <location>
        <position position="387"/>
    </location>
    <ligand>
        <name>NAD(+)</name>
        <dbReference type="ChEBI" id="CHEBI:57540"/>
    </ligand>
</feature>
<comment type="function">
    <text evidence="1">May play a key role in the regulation of the intracellular concentration of adenosylhomocysteine.</text>
</comment>
<comment type="catalytic activity">
    <reaction evidence="1">
        <text>S-adenosyl-L-homocysteine + H2O = L-homocysteine + adenosine</text>
        <dbReference type="Rhea" id="RHEA:21708"/>
        <dbReference type="ChEBI" id="CHEBI:15377"/>
        <dbReference type="ChEBI" id="CHEBI:16335"/>
        <dbReference type="ChEBI" id="CHEBI:57856"/>
        <dbReference type="ChEBI" id="CHEBI:58199"/>
        <dbReference type="EC" id="3.13.2.1"/>
    </reaction>
</comment>
<comment type="cofactor">
    <cofactor evidence="1">
        <name>NAD(+)</name>
        <dbReference type="ChEBI" id="CHEBI:57540"/>
    </cofactor>
    <text evidence="1">Binds 1 NAD(+) per subunit.</text>
</comment>
<comment type="pathway">
    <text evidence="1">Amino-acid biosynthesis; L-homocysteine biosynthesis; L-homocysteine from S-adenosyl-L-homocysteine: step 1/1.</text>
</comment>
<comment type="subcellular location">
    <subcellularLocation>
        <location evidence="1">Cytoplasm</location>
    </subcellularLocation>
</comment>
<comment type="similarity">
    <text evidence="1">Belongs to the adenosylhomocysteinase family.</text>
</comment>
<organism>
    <name type="scientific">Paraburkholderia xenovorans (strain LB400)</name>
    <dbReference type="NCBI Taxonomy" id="266265"/>
    <lineage>
        <taxon>Bacteria</taxon>
        <taxon>Pseudomonadati</taxon>
        <taxon>Pseudomonadota</taxon>
        <taxon>Betaproteobacteria</taxon>
        <taxon>Burkholderiales</taxon>
        <taxon>Burkholderiaceae</taxon>
        <taxon>Paraburkholderia</taxon>
    </lineage>
</organism>
<reference key="1">
    <citation type="journal article" date="2006" name="Proc. Natl. Acad. Sci. U.S.A.">
        <title>Burkholderia xenovorans LB400 harbors a multi-replicon, 9.73-Mbp genome shaped for versatility.</title>
        <authorList>
            <person name="Chain P.S.G."/>
            <person name="Denef V.J."/>
            <person name="Konstantinidis K.T."/>
            <person name="Vergez L.M."/>
            <person name="Agullo L."/>
            <person name="Reyes V.L."/>
            <person name="Hauser L."/>
            <person name="Cordova M."/>
            <person name="Gomez L."/>
            <person name="Gonzalez M."/>
            <person name="Land M."/>
            <person name="Lao V."/>
            <person name="Larimer F."/>
            <person name="LiPuma J.J."/>
            <person name="Mahenthiralingam E."/>
            <person name="Malfatti S.A."/>
            <person name="Marx C.J."/>
            <person name="Parnell J.J."/>
            <person name="Ramette A."/>
            <person name="Richardson P."/>
            <person name="Seeger M."/>
            <person name="Smith D."/>
            <person name="Spilker T."/>
            <person name="Sul W.J."/>
            <person name="Tsoi T.V."/>
            <person name="Ulrich L.E."/>
            <person name="Zhulin I.B."/>
            <person name="Tiedje J.M."/>
        </authorList>
    </citation>
    <scope>NUCLEOTIDE SEQUENCE [LARGE SCALE GENOMIC DNA]</scope>
    <source>
        <strain>LB400</strain>
    </source>
</reference>
<keyword id="KW-0963">Cytoplasm</keyword>
<keyword id="KW-0378">Hydrolase</keyword>
<keyword id="KW-0520">NAD</keyword>
<keyword id="KW-0554">One-carbon metabolism</keyword>
<keyword id="KW-1185">Reference proteome</keyword>
<name>SAHH_PARXL</name>
<sequence length="473" mass="52309">MNAAVIDSKNSQDFIVADMSLADWGRKELNIAETEMPGLVQTREEYKVQQPLKGARIAGSLHMTIQTGVLIETLTALGADVRWASCNIFSTQDHAAAAIAKAGTPVFAFKGESLDEYWEFSHRIFEWPNGEFANMILDDGGDATLLLILGSKAEKDRSVISKPTNEEEVALYKSIERHLDADPTWYSTRLAHIKGVTEETTTGVHRLYQMEKEGRLPFPAINVNDSVTKSKFDNLYGCRESLVDGIKRATDVMIAGKIAVVAGYGDVGKGCAQSLRGLGATVWVTEIDPICALQAAMEGYRVVTMEYAADKADIFVTATGNYHVIGHDHMKAMRHNAIVCNIGHFDSEIDVASTRQYQWDNIKPQVDHIIFPDGKRVILLAEGRLVNLGCATGHPSFVMSNSFTNQTLAQIELFTQGNKYENKVYVLPKHLDEKVARLHLARIGANLTVLSDEQAGYIGVDKNGPFKPNHYRY</sequence>
<gene>
    <name evidence="1" type="primary">ahcY</name>
    <name type="ordered locus">Bxeno_A4215</name>
    <name type="ORF">Bxe_A0178</name>
</gene>
<accession>Q13T36</accession>
<protein>
    <recommendedName>
        <fullName evidence="1">Adenosylhomocysteinase</fullName>
        <ecNumber evidence="1">3.13.2.1</ecNumber>
    </recommendedName>
    <alternativeName>
        <fullName evidence="1">S-adenosyl-L-homocysteine hydrolase</fullName>
        <shortName evidence="1">AdoHcyase</shortName>
    </alternativeName>
</protein>
<proteinExistence type="inferred from homology"/>
<dbReference type="EC" id="3.13.2.1" evidence="1"/>
<dbReference type="EMBL" id="CP000270">
    <property type="protein sequence ID" value="ABE32753.1"/>
    <property type="molecule type" value="Genomic_DNA"/>
</dbReference>
<dbReference type="RefSeq" id="WP_011490175.1">
    <property type="nucleotide sequence ID" value="NC_007951.1"/>
</dbReference>
<dbReference type="SMR" id="Q13T36"/>
<dbReference type="STRING" id="266265.Bxe_A0178"/>
<dbReference type="KEGG" id="bxb:DR64_2351"/>
<dbReference type="KEGG" id="bxe:Bxe_A0178"/>
<dbReference type="PATRIC" id="fig|266265.5.peg.4433"/>
<dbReference type="eggNOG" id="COG0499">
    <property type="taxonomic scope" value="Bacteria"/>
</dbReference>
<dbReference type="OrthoDB" id="9802717at2"/>
<dbReference type="UniPathway" id="UPA00314">
    <property type="reaction ID" value="UER00076"/>
</dbReference>
<dbReference type="Proteomes" id="UP000001817">
    <property type="component" value="Chromosome 1"/>
</dbReference>
<dbReference type="GO" id="GO:0005829">
    <property type="term" value="C:cytosol"/>
    <property type="evidence" value="ECO:0007669"/>
    <property type="project" value="TreeGrafter"/>
</dbReference>
<dbReference type="GO" id="GO:0004013">
    <property type="term" value="F:adenosylhomocysteinase activity"/>
    <property type="evidence" value="ECO:0007669"/>
    <property type="project" value="UniProtKB-UniRule"/>
</dbReference>
<dbReference type="GO" id="GO:0071269">
    <property type="term" value="P:L-homocysteine biosynthetic process"/>
    <property type="evidence" value="ECO:0007669"/>
    <property type="project" value="UniProtKB-UniRule"/>
</dbReference>
<dbReference type="GO" id="GO:0006730">
    <property type="term" value="P:one-carbon metabolic process"/>
    <property type="evidence" value="ECO:0007669"/>
    <property type="project" value="UniProtKB-KW"/>
</dbReference>
<dbReference type="GO" id="GO:0033353">
    <property type="term" value="P:S-adenosylmethionine cycle"/>
    <property type="evidence" value="ECO:0007669"/>
    <property type="project" value="TreeGrafter"/>
</dbReference>
<dbReference type="CDD" id="cd00401">
    <property type="entry name" value="SAHH"/>
    <property type="match status" value="1"/>
</dbReference>
<dbReference type="FunFam" id="3.40.50.720:FF:000004">
    <property type="entry name" value="Adenosylhomocysteinase"/>
    <property type="match status" value="1"/>
</dbReference>
<dbReference type="Gene3D" id="3.40.50.1480">
    <property type="entry name" value="Adenosylhomocysteinase-like"/>
    <property type="match status" value="1"/>
</dbReference>
<dbReference type="Gene3D" id="3.40.50.720">
    <property type="entry name" value="NAD(P)-binding Rossmann-like Domain"/>
    <property type="match status" value="1"/>
</dbReference>
<dbReference type="HAMAP" id="MF_00563">
    <property type="entry name" value="AdoHcyase"/>
    <property type="match status" value="1"/>
</dbReference>
<dbReference type="InterPro" id="IPR042172">
    <property type="entry name" value="Adenosylhomocyst_ase-like_sf"/>
</dbReference>
<dbReference type="InterPro" id="IPR000043">
    <property type="entry name" value="Adenosylhomocysteinase-like"/>
</dbReference>
<dbReference type="InterPro" id="IPR015878">
    <property type="entry name" value="Ado_hCys_hydrolase_NAD-bd"/>
</dbReference>
<dbReference type="InterPro" id="IPR036291">
    <property type="entry name" value="NAD(P)-bd_dom_sf"/>
</dbReference>
<dbReference type="InterPro" id="IPR020082">
    <property type="entry name" value="S-Ado-L-homoCys_hydrolase_CS"/>
</dbReference>
<dbReference type="NCBIfam" id="TIGR00936">
    <property type="entry name" value="ahcY"/>
    <property type="match status" value="1"/>
</dbReference>
<dbReference type="NCBIfam" id="NF004005">
    <property type="entry name" value="PRK05476.2-3"/>
    <property type="match status" value="1"/>
</dbReference>
<dbReference type="PANTHER" id="PTHR23420">
    <property type="entry name" value="ADENOSYLHOMOCYSTEINASE"/>
    <property type="match status" value="1"/>
</dbReference>
<dbReference type="PANTHER" id="PTHR23420:SF0">
    <property type="entry name" value="ADENOSYLHOMOCYSTEINASE"/>
    <property type="match status" value="1"/>
</dbReference>
<dbReference type="Pfam" id="PF05221">
    <property type="entry name" value="AdoHcyase"/>
    <property type="match status" value="1"/>
</dbReference>
<dbReference type="Pfam" id="PF00670">
    <property type="entry name" value="AdoHcyase_NAD"/>
    <property type="match status" value="1"/>
</dbReference>
<dbReference type="PIRSF" id="PIRSF001109">
    <property type="entry name" value="Ad_hcy_hydrolase"/>
    <property type="match status" value="1"/>
</dbReference>
<dbReference type="SMART" id="SM00996">
    <property type="entry name" value="AdoHcyase"/>
    <property type="match status" value="1"/>
</dbReference>
<dbReference type="SMART" id="SM00997">
    <property type="entry name" value="AdoHcyase_NAD"/>
    <property type="match status" value="1"/>
</dbReference>
<dbReference type="SUPFAM" id="SSF52283">
    <property type="entry name" value="Formate/glycerate dehydrogenase catalytic domain-like"/>
    <property type="match status" value="1"/>
</dbReference>
<dbReference type="SUPFAM" id="SSF51735">
    <property type="entry name" value="NAD(P)-binding Rossmann-fold domains"/>
    <property type="match status" value="1"/>
</dbReference>
<dbReference type="PROSITE" id="PS00738">
    <property type="entry name" value="ADOHCYASE_1"/>
    <property type="match status" value="1"/>
</dbReference>
<dbReference type="PROSITE" id="PS00739">
    <property type="entry name" value="ADOHCYASE_2"/>
    <property type="match status" value="1"/>
</dbReference>
<evidence type="ECO:0000255" key="1">
    <source>
        <dbReference type="HAMAP-Rule" id="MF_00563"/>
    </source>
</evidence>